<accession>A0A0A2JW91</accession>
<protein>
    <recommendedName>
        <fullName evidence="8">Highly reducing polyketide synthase cnsI</fullName>
        <ecNumber evidence="6">2.3.1.-</ecNumber>
    </recommendedName>
    <alternativeName>
        <fullName evidence="8">Communesin biosynthesis cluster protein I</fullName>
    </alternativeName>
</protein>
<dbReference type="EC" id="2.3.1.-" evidence="6"/>
<dbReference type="EMBL" id="JQFZ01000090">
    <property type="protein sequence ID" value="KGO59702.1"/>
    <property type="molecule type" value="Genomic_DNA"/>
</dbReference>
<dbReference type="RefSeq" id="XP_016600815.1">
    <property type="nucleotide sequence ID" value="XM_016742817.1"/>
</dbReference>
<dbReference type="SMR" id="A0A0A2JW91"/>
<dbReference type="STRING" id="27334.A0A0A2JW91"/>
<dbReference type="GeneID" id="27678236"/>
<dbReference type="VEuPathDB" id="FungiDB:PEXP_030540"/>
<dbReference type="HOGENOM" id="CLU_000022_31_0_1"/>
<dbReference type="Proteomes" id="UP000030143">
    <property type="component" value="Unassembled WGS sequence"/>
</dbReference>
<dbReference type="GO" id="GO:0004315">
    <property type="term" value="F:3-oxoacyl-[acyl-carrier-protein] synthase activity"/>
    <property type="evidence" value="ECO:0007669"/>
    <property type="project" value="InterPro"/>
</dbReference>
<dbReference type="GO" id="GO:0004312">
    <property type="term" value="F:fatty acid synthase activity"/>
    <property type="evidence" value="ECO:0007669"/>
    <property type="project" value="TreeGrafter"/>
</dbReference>
<dbReference type="GO" id="GO:0016491">
    <property type="term" value="F:oxidoreductase activity"/>
    <property type="evidence" value="ECO:0007669"/>
    <property type="project" value="UniProtKB-KW"/>
</dbReference>
<dbReference type="GO" id="GO:0031177">
    <property type="term" value="F:phosphopantetheine binding"/>
    <property type="evidence" value="ECO:0007669"/>
    <property type="project" value="InterPro"/>
</dbReference>
<dbReference type="GO" id="GO:0006633">
    <property type="term" value="P:fatty acid biosynthetic process"/>
    <property type="evidence" value="ECO:0007669"/>
    <property type="project" value="InterPro"/>
</dbReference>
<dbReference type="GO" id="GO:1901336">
    <property type="term" value="P:lactone biosynthetic process"/>
    <property type="evidence" value="ECO:0007669"/>
    <property type="project" value="UniProtKB-ARBA"/>
</dbReference>
<dbReference type="GO" id="GO:0030639">
    <property type="term" value="P:polyketide biosynthetic process"/>
    <property type="evidence" value="ECO:0007669"/>
    <property type="project" value="UniProtKB-ARBA"/>
</dbReference>
<dbReference type="CDD" id="cd05195">
    <property type="entry name" value="enoyl_red"/>
    <property type="match status" value="1"/>
</dbReference>
<dbReference type="CDD" id="cd00833">
    <property type="entry name" value="PKS"/>
    <property type="match status" value="1"/>
</dbReference>
<dbReference type="Gene3D" id="3.40.47.10">
    <property type="match status" value="1"/>
</dbReference>
<dbReference type="Gene3D" id="1.10.1200.10">
    <property type="entry name" value="ACP-like"/>
    <property type="match status" value="1"/>
</dbReference>
<dbReference type="Gene3D" id="3.40.366.10">
    <property type="entry name" value="Malonyl-Coenzyme A Acyl Carrier Protein, domain 2"/>
    <property type="match status" value="1"/>
</dbReference>
<dbReference type="Gene3D" id="3.90.180.10">
    <property type="entry name" value="Medium-chain alcohol dehydrogenases, catalytic domain"/>
    <property type="match status" value="1"/>
</dbReference>
<dbReference type="Gene3D" id="3.40.50.720">
    <property type="entry name" value="NAD(P)-binding Rossmann-like Domain"/>
    <property type="match status" value="1"/>
</dbReference>
<dbReference type="Gene3D" id="3.10.129.110">
    <property type="entry name" value="Polyketide synthase dehydratase"/>
    <property type="match status" value="1"/>
</dbReference>
<dbReference type="InterPro" id="IPR001227">
    <property type="entry name" value="Ac_transferase_dom_sf"/>
</dbReference>
<dbReference type="InterPro" id="IPR036736">
    <property type="entry name" value="ACP-like_sf"/>
</dbReference>
<dbReference type="InterPro" id="IPR014043">
    <property type="entry name" value="Acyl_transferase_dom"/>
</dbReference>
<dbReference type="InterPro" id="IPR016035">
    <property type="entry name" value="Acyl_Trfase/lysoPLipase"/>
</dbReference>
<dbReference type="InterPro" id="IPR011032">
    <property type="entry name" value="GroES-like_sf"/>
</dbReference>
<dbReference type="InterPro" id="IPR018201">
    <property type="entry name" value="Ketoacyl_synth_AS"/>
</dbReference>
<dbReference type="InterPro" id="IPR014031">
    <property type="entry name" value="Ketoacyl_synth_C"/>
</dbReference>
<dbReference type="InterPro" id="IPR014030">
    <property type="entry name" value="Ketoacyl_synth_N"/>
</dbReference>
<dbReference type="InterPro" id="IPR016036">
    <property type="entry name" value="Malonyl_transacylase_ACP-bd"/>
</dbReference>
<dbReference type="InterPro" id="IPR036291">
    <property type="entry name" value="NAD(P)-bd_dom_sf"/>
</dbReference>
<dbReference type="InterPro" id="IPR032821">
    <property type="entry name" value="PKS_assoc"/>
</dbReference>
<dbReference type="InterPro" id="IPR020841">
    <property type="entry name" value="PKS_Beta-ketoAc_synthase_dom"/>
</dbReference>
<dbReference type="InterPro" id="IPR042104">
    <property type="entry name" value="PKS_dehydratase_sf"/>
</dbReference>
<dbReference type="InterPro" id="IPR020807">
    <property type="entry name" value="PKS_DH"/>
</dbReference>
<dbReference type="InterPro" id="IPR049551">
    <property type="entry name" value="PKS_DH_C"/>
</dbReference>
<dbReference type="InterPro" id="IPR049552">
    <property type="entry name" value="PKS_DH_N"/>
</dbReference>
<dbReference type="InterPro" id="IPR020843">
    <property type="entry name" value="PKS_ER"/>
</dbReference>
<dbReference type="InterPro" id="IPR013968">
    <property type="entry name" value="PKS_KR"/>
</dbReference>
<dbReference type="InterPro" id="IPR049900">
    <property type="entry name" value="PKS_mFAS_DH"/>
</dbReference>
<dbReference type="InterPro" id="IPR050091">
    <property type="entry name" value="PKS_NRPS_Biosynth_Enz"/>
</dbReference>
<dbReference type="InterPro" id="IPR020806">
    <property type="entry name" value="PKS_PP-bd"/>
</dbReference>
<dbReference type="InterPro" id="IPR009081">
    <property type="entry name" value="PP-bd_ACP"/>
</dbReference>
<dbReference type="InterPro" id="IPR016039">
    <property type="entry name" value="Thiolase-like"/>
</dbReference>
<dbReference type="PANTHER" id="PTHR43775:SF29">
    <property type="entry name" value="ASPERFURANONE POLYKETIDE SYNTHASE AFOG-RELATED"/>
    <property type="match status" value="1"/>
</dbReference>
<dbReference type="PANTHER" id="PTHR43775">
    <property type="entry name" value="FATTY ACID SYNTHASE"/>
    <property type="match status" value="1"/>
</dbReference>
<dbReference type="Pfam" id="PF00698">
    <property type="entry name" value="Acyl_transf_1"/>
    <property type="match status" value="1"/>
</dbReference>
<dbReference type="Pfam" id="PF16197">
    <property type="entry name" value="KAsynt_C_assoc"/>
    <property type="match status" value="1"/>
</dbReference>
<dbReference type="Pfam" id="PF00109">
    <property type="entry name" value="ketoacyl-synt"/>
    <property type="match status" value="1"/>
</dbReference>
<dbReference type="Pfam" id="PF02801">
    <property type="entry name" value="Ketoacyl-synt_C"/>
    <property type="match status" value="1"/>
</dbReference>
<dbReference type="Pfam" id="PF08659">
    <property type="entry name" value="KR"/>
    <property type="match status" value="1"/>
</dbReference>
<dbReference type="Pfam" id="PF21089">
    <property type="entry name" value="PKS_DH_N"/>
    <property type="match status" value="1"/>
</dbReference>
<dbReference type="Pfam" id="PF00550">
    <property type="entry name" value="PP-binding"/>
    <property type="match status" value="1"/>
</dbReference>
<dbReference type="Pfam" id="PF14765">
    <property type="entry name" value="PS-DH"/>
    <property type="match status" value="1"/>
</dbReference>
<dbReference type="SMART" id="SM00827">
    <property type="entry name" value="PKS_AT"/>
    <property type="match status" value="1"/>
</dbReference>
<dbReference type="SMART" id="SM00826">
    <property type="entry name" value="PKS_DH"/>
    <property type="match status" value="1"/>
</dbReference>
<dbReference type="SMART" id="SM00829">
    <property type="entry name" value="PKS_ER"/>
    <property type="match status" value="1"/>
</dbReference>
<dbReference type="SMART" id="SM00822">
    <property type="entry name" value="PKS_KR"/>
    <property type="match status" value="1"/>
</dbReference>
<dbReference type="SMART" id="SM00825">
    <property type="entry name" value="PKS_KS"/>
    <property type="match status" value="1"/>
</dbReference>
<dbReference type="SMART" id="SM00823">
    <property type="entry name" value="PKS_PP"/>
    <property type="match status" value="1"/>
</dbReference>
<dbReference type="SUPFAM" id="SSF47336">
    <property type="entry name" value="ACP-like"/>
    <property type="match status" value="1"/>
</dbReference>
<dbReference type="SUPFAM" id="SSF52151">
    <property type="entry name" value="FabD/lysophospholipase-like"/>
    <property type="match status" value="1"/>
</dbReference>
<dbReference type="SUPFAM" id="SSF50129">
    <property type="entry name" value="GroES-like"/>
    <property type="match status" value="1"/>
</dbReference>
<dbReference type="SUPFAM" id="SSF51735">
    <property type="entry name" value="NAD(P)-binding Rossmann-fold domains"/>
    <property type="match status" value="2"/>
</dbReference>
<dbReference type="SUPFAM" id="SSF55048">
    <property type="entry name" value="Probable ACP-binding domain of malonyl-CoA ACP transacylase"/>
    <property type="match status" value="1"/>
</dbReference>
<dbReference type="SUPFAM" id="SSF53901">
    <property type="entry name" value="Thiolase-like"/>
    <property type="match status" value="1"/>
</dbReference>
<dbReference type="PROSITE" id="PS50075">
    <property type="entry name" value="CARRIER"/>
    <property type="match status" value="1"/>
</dbReference>
<dbReference type="PROSITE" id="PS00606">
    <property type="entry name" value="KS3_1"/>
    <property type="match status" value="1"/>
</dbReference>
<dbReference type="PROSITE" id="PS52004">
    <property type="entry name" value="KS3_2"/>
    <property type="match status" value="1"/>
</dbReference>
<dbReference type="PROSITE" id="PS52019">
    <property type="entry name" value="PKS_MFAS_DH"/>
    <property type="match status" value="1"/>
</dbReference>
<sequence length="2363" mass="256832">MSTETQPEMASTPPEPIAIIGMSCRLSGEASSVDGFWDMLRNGRTGHGRVPSSRYEASAWYHPNQDRKGGINHDSGFFLEEDPSRFDAPFFSITAKEAAGMDPTQRLLLEVAYETFENSGVPMESLPGSRTGVFTGCMTNDYELLSTGDLYNMPHNAATGNARAMLANRLSWFFDLRGPSIMLDTACSSSLTALHLASKSLRDGECEMALVSGASLILHPNFTQRLSSMHMLSPDGISHSFDASANGYGRGEGFAAVLLKPLRTALADNDAIRAIIRATGINQDGRTPGITMPSRQAQAGLIRALYGPGLPSLQETAFFEAHGTGTKVGDPTELSAIGECLMGAETSTNDRLYVGSVKGNIGHTEGAAGVASLIKVVLCLENDMLVPNAGFSKLNSNIHLDKWLLRLSDKTIRWPSHLPRRASINSFGFGGSNAHAIVESASTYLERPAALLSGLDKGEPQIVVFSTHDKTGIDRVAAKWGPFLQAQIDAEQNISFRDIAYTMYARRSQLSFRSFAVAGSLGQLRDALQQGLPHFLRANGTAHANLAFVFTGQGAQWAQMGVELLQVTSFRESITRSEQILSSLGCPWNLFEEIQVEAATSRMNQPDRSQSICCALQIALVNLLASWGVHPKATVGHSSGEIGAAYAAGFITQEDAIRIAYFRGLCSLQVACHGRAGAMLAANLSLPDAQTYLQGVPPRSVVVACVNGPKSVTLSGDADRIDQLEKQLQADGLFARKLRVETAYHSPHMNMVAEGYRHDLQDIQPAKCGESSIAMFSSVTKERVYATDMTADYWVRNLVSPVEFLSAVTSLANMTEASQYRHRAVAVKWSAFLEIGPHEALKGPFLQVLKSINAGLSTVPYHALVRRHADALQTTLNVAGLLWCIGIPIDIEAVNSSINTAVPQLMHNLPSYPWNHQGSFWHEPVASARLRKRREPHHDLLGSPMDFQNDTEPRWRNFLRVSDIPWLADHVVADSILFPAAGMIVMVAEAGRILANTSLRLEGIEFNDLAFLQGLVIPDDDRGVETVLHVAPYHELAEWYEFTLFSLPEDGPWVRHATGTFTLHYDARGVPLNVEEWGLSVERFRKIQTAECETNRDAVYEWLSQTGGVTMGPAFQSVSRAAFCTEENRLWIEGEVTDTRTMMPSEYASPCFIHPTSLDTLFQAAVLSCSDALGNQNAKIPVGVDRLYLSTTWDLQQGDYFSVHTETCLNDGDSRLDSIASDVSWSQPRVVLKGVRLGPVPMSKVPSTSTTAGVDSGTSRFSSIVWAQHLESPTSPALAGHDRDGQLTDWVRDICYTYGNACALVVTQPSWKSPAMTSIQTVRPQLGSRPCLQGLTIVIVGLDKAADEFATAVTRLMPGAQVKQIAALQDFSPSTFNESFFDVVLVDQPCIGNAADADVLLTSLSSTTKQDGVLAVRTYDSQLDPMDYIQRSSEWKVSGRIRDGDFLLAHRQRIPAPLDSTIFVLMPDTEQIPPTFRVALERALSAVGVKLCPVDVEDINGLAGKMVISLLEFRHPWTSKWTSVAMAQFKMLLEARYILWVSPIPILSKDASAASFGASTGLLRTLRNEQPGVTLPQVQYDPDDPNSETSLAQGILQVIQLTLVPVPHRNHDMEYRLQHGRLLVPRVVSEAVVDDKMQTLLHGPRPILARLADDPRALRFHAGSPDGHGGQWVEDRQLVSDVPDDHVEVQLSLRSVVARGSRNFNAHESRLSVVEAVGVIRKLGFAGSTDLSVGDIVVLLVPGAGTVDGMSNRIQVSSKAVAKLPAQLTLAQAVTVPLAYILAYTSLFDIARLGPNCRVLLVGPVGPILRALLSCALEIRGMQVYVATEERAVVEELVAQYAIAPEYVLSIHGGLDGRIADLTEGKGVTAVLSCLGGSSGRLAARCLGSGGHYVDLTGEMNLAALPKAVVSQGCTFTSVNLNSMLQNQSEKVYSSFRRAVATIGLHHQIQPTSIFPISKWAEAESLARQTGISVAIDFTDPGQVPVVPALQEPVNLPPQQTYLLAGGLGMIGLGFAKTLVDSGARHLVILSRSGVLQPSQRIAVASLADQGCHVEIIRCDISQEADLQQVLSQVRSQNWQLKGIIQCATVLKDAAFHTMTFEDWASSTNPKILGTLNLHKVFVDVDLDFFITLSSVSGLIGNIGQANYAAGNVFMDELMIWRRAHGLPGHSIDIGLVPDASGMSDMAETAEVRRSRYSHLEGTEITLRELQMLLRVIILGDIPVPVQIIAGITDDLPREGASSWQYDRKLDHRVRLGHSEPDNMPAQISELLKSSPTIEDASYVVNQALREYLASAMATTADTIDSDLPLSSLGVDSLKVTEVQNWVSRKMGAQLSSFDFLGMQPLRVLSEKIAAQSAFVTVS</sequence>
<feature type="chain" id="PRO_0000446464" description="Highly reducing polyketide synthase cnsI">
    <location>
        <begin position="1"/>
        <end position="2363"/>
    </location>
</feature>
<feature type="domain" description="Ketosynthase family 3 (KS3)" evidence="3 9">
    <location>
        <begin position="14"/>
        <end position="440"/>
    </location>
</feature>
<feature type="domain" description="PKS/mFAS DH" evidence="4">
    <location>
        <begin position="938"/>
        <end position="1246"/>
    </location>
</feature>
<feature type="domain" description="Carrier" evidence="2 9">
    <location>
        <begin position="2279"/>
        <end position="2357"/>
    </location>
</feature>
<feature type="region of interest" description="Malonyl-CoA:ACP transacylase (MAT) domain" evidence="1 9">
    <location>
        <begin position="546"/>
        <end position="854"/>
    </location>
</feature>
<feature type="region of interest" description="Dehydratase (DH) domain" evidence="1 9">
    <location>
        <begin position="938"/>
        <end position="1224"/>
    </location>
</feature>
<feature type="region of interest" description="N-terminal hotdog fold" evidence="4">
    <location>
        <begin position="938"/>
        <end position="1068"/>
    </location>
</feature>
<feature type="region of interest" description="C-terminal hotdog fold" evidence="4">
    <location>
        <begin position="1089"/>
        <end position="1246"/>
    </location>
</feature>
<feature type="region of interest" description="Enoylreductase (ER) domain" evidence="1 9">
    <location>
        <begin position="1669"/>
        <end position="1976"/>
    </location>
</feature>
<feature type="region of interest" description="Catalytic ketoreductase (KRc) domain" evidence="1 9">
    <location>
        <begin position="2001"/>
        <end position="2177"/>
    </location>
</feature>
<feature type="active site" description="For beta-ketoacyl synthase activity" evidence="3">
    <location>
        <position position="187"/>
    </location>
</feature>
<feature type="active site" description="For beta-ketoacyl synthase activity" evidence="3">
    <location>
        <position position="322"/>
    </location>
</feature>
<feature type="active site" description="For beta-ketoacyl synthase activity" evidence="3">
    <location>
        <position position="363"/>
    </location>
</feature>
<feature type="active site" description="For malonyltransferase activity" evidence="5">
    <location>
        <position position="638"/>
    </location>
</feature>
<feature type="active site" description="Proton acceptor; for dehydratase activity" evidence="4">
    <location>
        <position position="970"/>
    </location>
</feature>
<feature type="active site" description="Proton donor; for dehydratase activity" evidence="4">
    <location>
        <position position="1159"/>
    </location>
</feature>
<feature type="modified residue" description="O-(pantetheine 4'-phosphoryl)serine" evidence="2">
    <location>
        <position position="2317"/>
    </location>
</feature>
<keyword id="KW-0511">Multifunctional enzyme</keyword>
<keyword id="KW-0560">Oxidoreductase</keyword>
<keyword id="KW-0596">Phosphopantetheine</keyword>
<keyword id="KW-0597">Phosphoprotein</keyword>
<keyword id="KW-1185">Reference proteome</keyword>
<keyword id="KW-0808">Transferase</keyword>
<comment type="function">
    <text evidence="6 7">Highly reducing polyketide synthase; part of the gene cluster that mediates the biosynthesis of communesins, a prominent class of indole alkaloids with great potential as pharmaceuticals (PubMed:25571861). Communesins are biosynthesized by the coupling of tryptamine and aurantioclavine, two building blocks derived from L-tryptophan (PubMed:25571861). The L-tryptophan decarboxylase cnsB converts L-tryptophan to tryptamine, whereas the tryptophan dimethylallyltransferase cnsF converts L-tryptophan to 4-dimethylallyl tryptophan which is further transformed to aurantioclavine by the aurantioclavine synthase cnsA, probably aided by the catalase cnsD (PubMed:25571861). The cytochrome P450 monooxygenase cnsC catalyzes the heterodimeric coupling between the two different indole moieties, tryptamine and aurantioclavine, to construct vicinal quaternary stereocenters and yield the heptacyclic communesin scaffold (PubMed:26963294). The O-methyltransferase cnsE then methylates the communesin scaffold to produce communesin K, the simplest characterized communesin that contains the heptacyclic core (PubMed:25571861). The dioxygenase cnsJ converts communesin K into communesin I (PubMed:25571861). Acylation to introduce the hexadienyl group at position N16 of communesin I by the acyltransferase cnsK leads to the production of communesin B. The hexadienyl group is produced by the highly reducing polyketide synthase cnsI, before being hydrolytically removed from cnsI by the serine hydrolase cnsH, converted into hexadienyl-CoA by the CoA ligase cnsG, and then transferred to communesin I by cnsK (PubMed:25571861). Surprisingly, cnsK may also be a promiscuous acyltransferase that can tolerate a range of acyl groups, including acetyl-, propionyl-, and butyryl-CoA, which lead to communesins A, G and H respectively (PubMed:25571861). The roles of the alpha-ketoglutarate-dependent dioxygenases cnsM and cnsP have still to be determined (PubMed:25571861).</text>
</comment>
<comment type="pathway">
    <text evidence="6">Alkaloid biosynthesis.</text>
</comment>
<comment type="domain">
    <text evidence="9">Multidomain protein; including a starter unit:ACP transacylase (SAT) that selects the starter unit; a ketosynthase (KS) that catalyzes repeated decarboxylative condensation to elongate the polyketide backbone; a malonyl-CoA:ACP transacylase (MAT) that selects and transfers the extender unit malonyl-CoA; a product template (PT) domain that controls the immediate cyclization regioselectivity of the reactive polyketide backbone; and an acyl-carrier protein (ACP) that serves as the tether of the growing and completed polyketide via its phosphopantetheinyl arm.</text>
</comment>
<comment type="disruption phenotype">
    <text evidence="6">Abolishes the biosynthesis of communesin B and leads to the exclusive formation of communesin A.</text>
</comment>
<evidence type="ECO:0000255" key="1"/>
<evidence type="ECO:0000255" key="2">
    <source>
        <dbReference type="PROSITE-ProRule" id="PRU00258"/>
    </source>
</evidence>
<evidence type="ECO:0000255" key="3">
    <source>
        <dbReference type="PROSITE-ProRule" id="PRU01348"/>
    </source>
</evidence>
<evidence type="ECO:0000255" key="4">
    <source>
        <dbReference type="PROSITE-ProRule" id="PRU01363"/>
    </source>
</evidence>
<evidence type="ECO:0000255" key="5">
    <source>
        <dbReference type="PROSITE-ProRule" id="PRU10022"/>
    </source>
</evidence>
<evidence type="ECO:0000269" key="6">
    <source>
    </source>
</evidence>
<evidence type="ECO:0000269" key="7">
    <source>
    </source>
</evidence>
<evidence type="ECO:0000303" key="8">
    <source>
    </source>
</evidence>
<evidence type="ECO:0000305" key="9">
    <source>
    </source>
</evidence>
<proteinExistence type="evidence at protein level"/>
<organism>
    <name type="scientific">Penicillium expansum</name>
    <name type="common">Blue mold rot fungus</name>
    <dbReference type="NCBI Taxonomy" id="27334"/>
    <lineage>
        <taxon>Eukaryota</taxon>
        <taxon>Fungi</taxon>
        <taxon>Dikarya</taxon>
        <taxon>Ascomycota</taxon>
        <taxon>Pezizomycotina</taxon>
        <taxon>Eurotiomycetes</taxon>
        <taxon>Eurotiomycetidae</taxon>
        <taxon>Eurotiales</taxon>
        <taxon>Aspergillaceae</taxon>
        <taxon>Penicillium</taxon>
    </lineage>
</organism>
<gene>
    <name evidence="8" type="primary">cnsI</name>
    <name type="ORF">PEX2_055430</name>
</gene>
<reference key="1">
    <citation type="journal article" date="2015" name="Mol. Plant Microbe Interact.">
        <title>Genome, transcriptome, and functional analyses of Penicillium expansum provide new insights into secondary metabolism and pathogenicity.</title>
        <authorList>
            <person name="Ballester A.R."/>
            <person name="Marcet-Houben M."/>
            <person name="Levin E."/>
            <person name="Sela N."/>
            <person name="Selma-Lazaro C."/>
            <person name="Carmona L."/>
            <person name="Wisniewski M."/>
            <person name="Droby S."/>
            <person name="Gonzalez-Candelas L."/>
            <person name="Gabaldon T."/>
        </authorList>
    </citation>
    <scope>NUCLEOTIDE SEQUENCE [LARGE SCALE GENOMIC DNA]</scope>
    <source>
        <strain>MD-8</strain>
    </source>
</reference>
<reference key="2">
    <citation type="journal article" date="2015" name="Angew. Chem. Int. Ed.">
        <title>Elucidation of the concise biosynthetic pathway of the communesin indole alkaloids.</title>
        <authorList>
            <person name="Lin H.C."/>
            <person name="Chiou G."/>
            <person name="Chooi Y.H."/>
            <person name="McMahon T.C."/>
            <person name="Xu W."/>
            <person name="Garg N.K."/>
            <person name="Tang Y."/>
        </authorList>
    </citation>
    <scope>IDENTIFICATION</scope>
    <scope>FUNCTION</scope>
    <scope>DISRUPTION PHENOTYPE</scope>
    <scope>CATALYTIC ACTIVITY</scope>
    <scope>PATHWAY</scope>
</reference>
<reference key="3">
    <citation type="journal article" date="2016" name="J. Am. Chem. Soc.">
        <title>P450-mediated coupling of indole fragments to forge communesin and unnatural isomers.</title>
        <authorList>
            <person name="Lin H.C."/>
            <person name="McMahon T.C."/>
            <person name="Patel A."/>
            <person name="Corsello M."/>
            <person name="Simon A."/>
            <person name="Xu W."/>
            <person name="Zhao M."/>
            <person name="Houk K.N."/>
            <person name="Garg N.K."/>
            <person name="Tang Y."/>
        </authorList>
    </citation>
    <scope>FUNCTION</scope>
</reference>
<name>CNSI_PENEN</name>